<sequence>MFKKADRKEARERRHLRVRKKVFGTPERPRLSVYRSEKNIYAQIIDDVNAVTLVAASSLDKAIEVKGSNKEAAKLVGELVAKRAIEKGINDVVFDRGGYVYHGRVEALASGAREAGLKF</sequence>
<keyword id="KW-1185">Reference proteome</keyword>
<keyword id="KW-0687">Ribonucleoprotein</keyword>
<keyword id="KW-0689">Ribosomal protein</keyword>
<keyword id="KW-0694">RNA-binding</keyword>
<keyword id="KW-0699">rRNA-binding</keyword>
<accession>Q8XHT9</accession>
<feature type="chain" id="PRO_0000131249" description="Large ribosomal subunit protein uL18">
    <location>
        <begin position="1"/>
        <end position="119"/>
    </location>
</feature>
<organism>
    <name type="scientific">Clostridium perfringens (strain 13 / Type A)</name>
    <dbReference type="NCBI Taxonomy" id="195102"/>
    <lineage>
        <taxon>Bacteria</taxon>
        <taxon>Bacillati</taxon>
        <taxon>Bacillota</taxon>
        <taxon>Clostridia</taxon>
        <taxon>Eubacteriales</taxon>
        <taxon>Clostridiaceae</taxon>
        <taxon>Clostridium</taxon>
    </lineage>
</organism>
<proteinExistence type="inferred from homology"/>
<protein>
    <recommendedName>
        <fullName evidence="1">Large ribosomal subunit protein uL18</fullName>
    </recommendedName>
    <alternativeName>
        <fullName evidence="2">50S ribosomal protein L18</fullName>
    </alternativeName>
</protein>
<reference key="1">
    <citation type="journal article" date="2002" name="Proc. Natl. Acad. Sci. U.S.A.">
        <title>Complete genome sequence of Clostridium perfringens, an anaerobic flesh-eater.</title>
        <authorList>
            <person name="Shimizu T."/>
            <person name="Ohtani K."/>
            <person name="Hirakawa H."/>
            <person name="Ohshima K."/>
            <person name="Yamashita A."/>
            <person name="Shiba T."/>
            <person name="Ogasawara N."/>
            <person name="Hattori M."/>
            <person name="Kuhara S."/>
            <person name="Hayashi H."/>
        </authorList>
    </citation>
    <scope>NUCLEOTIDE SEQUENCE [LARGE SCALE GENOMIC DNA]</scope>
    <source>
        <strain>13 / Type A</strain>
    </source>
</reference>
<evidence type="ECO:0000255" key="1">
    <source>
        <dbReference type="HAMAP-Rule" id="MF_01337"/>
    </source>
</evidence>
<evidence type="ECO:0000305" key="2"/>
<dbReference type="EMBL" id="BA000016">
    <property type="protein sequence ID" value="BAB82095.1"/>
    <property type="molecule type" value="Genomic_DNA"/>
</dbReference>
<dbReference type="RefSeq" id="WP_003454424.1">
    <property type="nucleotide sequence ID" value="NC_003366.1"/>
</dbReference>
<dbReference type="SMR" id="Q8XHT9"/>
<dbReference type="STRING" id="195102.gene:10491706"/>
<dbReference type="GeneID" id="93001025"/>
<dbReference type="KEGG" id="cpe:CPE2389"/>
<dbReference type="HOGENOM" id="CLU_098841_0_1_9"/>
<dbReference type="Proteomes" id="UP000000818">
    <property type="component" value="Chromosome"/>
</dbReference>
<dbReference type="GO" id="GO:0022625">
    <property type="term" value="C:cytosolic large ribosomal subunit"/>
    <property type="evidence" value="ECO:0007669"/>
    <property type="project" value="TreeGrafter"/>
</dbReference>
<dbReference type="GO" id="GO:0008097">
    <property type="term" value="F:5S rRNA binding"/>
    <property type="evidence" value="ECO:0007669"/>
    <property type="project" value="TreeGrafter"/>
</dbReference>
<dbReference type="GO" id="GO:0003735">
    <property type="term" value="F:structural constituent of ribosome"/>
    <property type="evidence" value="ECO:0007669"/>
    <property type="project" value="InterPro"/>
</dbReference>
<dbReference type="GO" id="GO:0006412">
    <property type="term" value="P:translation"/>
    <property type="evidence" value="ECO:0007669"/>
    <property type="project" value="UniProtKB-UniRule"/>
</dbReference>
<dbReference type="CDD" id="cd00432">
    <property type="entry name" value="Ribosomal_L18_L5e"/>
    <property type="match status" value="1"/>
</dbReference>
<dbReference type="FunFam" id="3.30.420.100:FF:000001">
    <property type="entry name" value="50S ribosomal protein L18"/>
    <property type="match status" value="1"/>
</dbReference>
<dbReference type="Gene3D" id="3.30.420.100">
    <property type="match status" value="1"/>
</dbReference>
<dbReference type="HAMAP" id="MF_01337_B">
    <property type="entry name" value="Ribosomal_uL18_B"/>
    <property type="match status" value="1"/>
</dbReference>
<dbReference type="InterPro" id="IPR004389">
    <property type="entry name" value="Ribosomal_uL18_bac-type"/>
</dbReference>
<dbReference type="InterPro" id="IPR005484">
    <property type="entry name" value="Ribosomal_uL18_bac/euk"/>
</dbReference>
<dbReference type="NCBIfam" id="TIGR00060">
    <property type="entry name" value="L18_bact"/>
    <property type="match status" value="1"/>
</dbReference>
<dbReference type="PANTHER" id="PTHR12899">
    <property type="entry name" value="39S RIBOSOMAL PROTEIN L18, MITOCHONDRIAL"/>
    <property type="match status" value="1"/>
</dbReference>
<dbReference type="PANTHER" id="PTHR12899:SF3">
    <property type="entry name" value="LARGE RIBOSOMAL SUBUNIT PROTEIN UL18M"/>
    <property type="match status" value="1"/>
</dbReference>
<dbReference type="Pfam" id="PF00861">
    <property type="entry name" value="Ribosomal_L18p"/>
    <property type="match status" value="1"/>
</dbReference>
<dbReference type="SUPFAM" id="SSF53137">
    <property type="entry name" value="Translational machinery components"/>
    <property type="match status" value="1"/>
</dbReference>
<comment type="function">
    <text evidence="1">This is one of the proteins that bind and probably mediate the attachment of the 5S RNA into the large ribosomal subunit, where it forms part of the central protuberance.</text>
</comment>
<comment type="subunit">
    <text evidence="1">Part of the 50S ribosomal subunit; part of the 5S rRNA/L5/L18/L25 subcomplex. Contacts the 5S and 23S rRNAs.</text>
</comment>
<comment type="similarity">
    <text evidence="1">Belongs to the universal ribosomal protein uL18 family.</text>
</comment>
<name>RL18_CLOPE</name>
<gene>
    <name evidence="1" type="primary">rplR</name>
    <name type="ordered locus">CPE2389</name>
</gene>